<proteinExistence type="evidence at transcript level"/>
<keyword id="KW-1064">Adaptive immunity</keyword>
<keyword id="KW-0202">Cytokine</keyword>
<keyword id="KW-1015">Disulfide bond</keyword>
<keyword id="KW-0325">Glycoprotein</keyword>
<keyword id="KW-0339">Growth factor</keyword>
<keyword id="KW-0391">Immunity</keyword>
<keyword id="KW-1185">Reference proteome</keyword>
<keyword id="KW-0964">Secreted</keyword>
<keyword id="KW-0732">Signal</keyword>
<organism>
    <name type="scientific">Bos taurus</name>
    <name type="common">Bovine</name>
    <dbReference type="NCBI Taxonomy" id="9913"/>
    <lineage>
        <taxon>Eukaryota</taxon>
        <taxon>Metazoa</taxon>
        <taxon>Chordata</taxon>
        <taxon>Craniata</taxon>
        <taxon>Vertebrata</taxon>
        <taxon>Euteleostomi</taxon>
        <taxon>Mammalia</taxon>
        <taxon>Eutheria</taxon>
        <taxon>Laurasiatheria</taxon>
        <taxon>Artiodactyla</taxon>
        <taxon>Ruminantia</taxon>
        <taxon>Pecora</taxon>
        <taxon>Bovidae</taxon>
        <taxon>Bovinae</taxon>
        <taxon>Bos</taxon>
    </lineage>
</organism>
<dbReference type="EMBL" id="M12791">
    <property type="protein sequence ID" value="AAA30586.1"/>
    <property type="molecule type" value="mRNA"/>
</dbReference>
<dbReference type="EMBL" id="M13204">
    <property type="protein sequence ID" value="AAA21143.1"/>
    <property type="status" value="ALT_INIT"/>
    <property type="molecule type" value="mRNA"/>
</dbReference>
<dbReference type="EMBL" id="AF535144">
    <property type="protein sequence ID" value="AAQ10670.1"/>
    <property type="molecule type" value="Genomic_DNA"/>
</dbReference>
<dbReference type="EMBL" id="AF348423">
    <property type="protein sequence ID" value="AAN76508.1"/>
    <property type="molecule type" value="mRNA"/>
</dbReference>
<dbReference type="EMBL" id="EF056472">
    <property type="protein sequence ID" value="ABK41607.1"/>
    <property type="molecule type" value="Genomic_DNA"/>
</dbReference>
<dbReference type="EMBL" id="EU276068">
    <property type="protein sequence ID" value="ABX72066.1"/>
    <property type="molecule type" value="mRNA"/>
</dbReference>
<dbReference type="EMBL" id="X52687">
    <property type="protein sequence ID" value="CAA36912.1"/>
    <property type="molecule type" value="Genomic_DNA"/>
</dbReference>
<dbReference type="EMBL" id="X17201">
    <property type="protein sequence ID" value="CAA35062.1"/>
    <property type="molecule type" value="Genomic_DNA"/>
</dbReference>
<dbReference type="PIR" id="I45913">
    <property type="entry name" value="I45913"/>
</dbReference>
<dbReference type="RefSeq" id="NP_851340.2">
    <property type="nucleotide sequence ID" value="NM_180997.2"/>
</dbReference>
<dbReference type="SMR" id="P05016"/>
<dbReference type="FunCoup" id="P05016">
    <property type="interactions" value="130"/>
</dbReference>
<dbReference type="STRING" id="9913.ENSBTAP00000027819"/>
<dbReference type="GlyCosmos" id="P05016">
    <property type="glycosylation" value="1 site, No reported glycans"/>
</dbReference>
<dbReference type="GlyGen" id="P05016">
    <property type="glycosylation" value="1 site"/>
</dbReference>
<dbReference type="PaxDb" id="9913-ENSBTAP00000027819"/>
<dbReference type="GeneID" id="280822"/>
<dbReference type="KEGG" id="bta:280822"/>
<dbReference type="CTD" id="3558"/>
<dbReference type="VEuPathDB" id="HostDB:ENSBTAG00000020883"/>
<dbReference type="eggNOG" id="ENOG502RVR5">
    <property type="taxonomic scope" value="Eukaryota"/>
</dbReference>
<dbReference type="HOGENOM" id="CLU_124210_0_0_1"/>
<dbReference type="InParanoid" id="P05016"/>
<dbReference type="OMA" id="NGVNNYE"/>
<dbReference type="OrthoDB" id="9450228at2759"/>
<dbReference type="Reactome" id="R-BTA-5673001">
    <property type="pathway name" value="RAF/MAP kinase cascade"/>
</dbReference>
<dbReference type="Reactome" id="R-BTA-9020558">
    <property type="pathway name" value="Interleukin-2 signaling"/>
</dbReference>
<dbReference type="Reactome" id="R-BTA-912526">
    <property type="pathway name" value="Interleukin receptor SHC signaling"/>
</dbReference>
<dbReference type="Proteomes" id="UP000009136">
    <property type="component" value="Chromosome 17"/>
</dbReference>
<dbReference type="Bgee" id="ENSBTAG00000020883">
    <property type="expression patterns" value="Expressed in abdominal lymph node and 28 other cell types or tissues"/>
</dbReference>
<dbReference type="GO" id="GO:0005615">
    <property type="term" value="C:extracellular space"/>
    <property type="evidence" value="ECO:0000318"/>
    <property type="project" value="GO_Central"/>
</dbReference>
<dbReference type="GO" id="GO:0005125">
    <property type="term" value="F:cytokine activity"/>
    <property type="evidence" value="ECO:0000318"/>
    <property type="project" value="GO_Central"/>
</dbReference>
<dbReference type="GO" id="GO:0008083">
    <property type="term" value="F:growth factor activity"/>
    <property type="evidence" value="ECO:0007669"/>
    <property type="project" value="UniProtKB-KW"/>
</dbReference>
<dbReference type="GO" id="GO:0005134">
    <property type="term" value="F:interleukin-2 receptor binding"/>
    <property type="evidence" value="ECO:0000318"/>
    <property type="project" value="GO_Central"/>
</dbReference>
<dbReference type="GO" id="GO:0002250">
    <property type="term" value="P:adaptive immune response"/>
    <property type="evidence" value="ECO:0007669"/>
    <property type="project" value="UniProtKB-KW"/>
</dbReference>
<dbReference type="GO" id="GO:0038110">
    <property type="term" value="P:interleukin-2-mediated signaling pathway"/>
    <property type="evidence" value="ECO:0000318"/>
    <property type="project" value="GO_Central"/>
</dbReference>
<dbReference type="GO" id="GO:0009891">
    <property type="term" value="P:positive regulation of biosynthetic process"/>
    <property type="evidence" value="ECO:0007669"/>
    <property type="project" value="UniProtKB-ARBA"/>
</dbReference>
<dbReference type="Gene3D" id="1.20.1250.10">
    <property type="match status" value="1"/>
</dbReference>
<dbReference type="InterPro" id="IPR009079">
    <property type="entry name" value="4_helix_cytokine-like_core"/>
</dbReference>
<dbReference type="InterPro" id="IPR000779">
    <property type="entry name" value="IL-2"/>
</dbReference>
<dbReference type="InterPro" id="IPR030477">
    <property type="entry name" value="IL-2_CS"/>
</dbReference>
<dbReference type="PANTHER" id="PTHR48487">
    <property type="entry name" value="INTERLEUKIN-2"/>
    <property type="match status" value="1"/>
</dbReference>
<dbReference type="PANTHER" id="PTHR48487:SF1">
    <property type="entry name" value="INTERLEUKIN-2"/>
    <property type="match status" value="1"/>
</dbReference>
<dbReference type="Pfam" id="PF00715">
    <property type="entry name" value="IL2"/>
    <property type="match status" value="1"/>
</dbReference>
<dbReference type="PRINTS" id="PR00265">
    <property type="entry name" value="INTERLEUKIN2"/>
</dbReference>
<dbReference type="SMART" id="SM00189">
    <property type="entry name" value="IL2"/>
    <property type="match status" value="1"/>
</dbReference>
<dbReference type="SUPFAM" id="SSF47266">
    <property type="entry name" value="4-helical cytokines"/>
    <property type="match status" value="1"/>
</dbReference>
<dbReference type="PROSITE" id="PS00424">
    <property type="entry name" value="INTERLEUKIN_2"/>
    <property type="match status" value="1"/>
</dbReference>
<protein>
    <recommendedName>
        <fullName>Interleukin-2</fullName>
        <shortName>IL-2</shortName>
    </recommendedName>
    <alternativeName>
        <fullName>T-cell growth factor</fullName>
        <shortName>TCGF</shortName>
    </alternativeName>
</protein>
<feature type="signal peptide" evidence="1">
    <location>
        <begin position="1"/>
        <end position="20"/>
    </location>
</feature>
<feature type="chain" id="PRO_0000015474" description="Interleukin-2">
    <location>
        <begin position="21"/>
        <end position="155"/>
    </location>
</feature>
<feature type="glycosylation site" description="O-linked (GalNAc...) threonine" evidence="1">
    <location>
        <position position="23"/>
    </location>
</feature>
<feature type="disulfide bond" evidence="1">
    <location>
        <begin position="79"/>
        <end position="127"/>
    </location>
</feature>
<feature type="sequence conflict" description="In Ref. 2; AAA21143." evidence="3" ref="2">
    <original>V</original>
    <variation>A</variation>
    <location>
        <position position="66"/>
    </location>
</feature>
<feature type="sequence conflict" description="In Ref. 4; AAN76508." evidence="3" ref="4">
    <original>V</original>
    <variation>G</variation>
    <location>
        <position position="66"/>
    </location>
</feature>
<reference key="1">
    <citation type="journal article" date="1986" name="Proc. Natl. Acad. Sci. U.S.A.">
        <title>Cloning, sequence, and expression of bovine interleukin 2.</title>
        <authorList>
            <person name="Cerretti D.P."/>
            <person name="McKereghan K."/>
            <person name="Larsen A."/>
            <person name="Cantrell M.A."/>
            <person name="Anderson D."/>
            <person name="Gillis S."/>
            <person name="Cosman D."/>
            <person name="Baker P.E."/>
        </authorList>
    </citation>
    <scope>NUCLEOTIDE SEQUENCE [MRNA]</scope>
</reference>
<reference key="2">
    <citation type="journal article" date="1986" name="Proc. Natl. Acad. Sci. U.S.A.">
        <title>Molecular cloning of a functional bovine interleukin 2 cDNA.</title>
        <authorList>
            <person name="Reeves R."/>
            <person name="Spies A.G."/>
            <person name="Nissen M.S."/>
            <person name="Buck C.D."/>
            <person name="Weinberg A.D."/>
            <person name="Barr P.J."/>
            <person name="Magnuson N.S."/>
            <person name="Magnuson J.A."/>
        </authorList>
    </citation>
    <scope>NUCLEOTIDE SEQUENCE [MRNA]</scope>
</reference>
<reference key="3">
    <citation type="journal article" date="2005" name="Vet. Immunol. Immunopathol.">
        <title>Functional analysis of a single nucleotide polymorphism in a potential binding site for GATA transcription factors in the ovine interleukin 2 gene.</title>
        <authorList>
            <person name="Luhken G."/>
            <person name="Stamm I."/>
            <person name="Menge C."/>
            <person name="Erhardt G."/>
        </authorList>
    </citation>
    <scope>NUCLEOTIDE SEQUENCE [GENOMIC DNA]</scope>
</reference>
<reference key="4">
    <citation type="submission" date="2001-02" db="EMBL/GenBank/DDBJ databases">
        <authorList>
            <person name="Ahn J."/>
        </authorList>
    </citation>
    <scope>NUCLEOTIDE SEQUENCE [MRNA]</scope>
</reference>
<reference key="5">
    <citation type="submission" date="2006-10" db="EMBL/GenBank/DDBJ databases">
        <title>Molecular characterization of Bos taurus IL2.</title>
        <authorList>
            <person name="Luehken G."/>
            <person name="Erhardt G."/>
        </authorList>
    </citation>
    <scope>NUCLEOTIDE SEQUENCE [GENOMIC DNA]</scope>
</reference>
<reference key="6">
    <citation type="submission" date="2007-11" db="EMBL/GenBank/DDBJ databases">
        <title>U.S. veterinary immune reagent network: expressed bovine gene sequences.</title>
        <authorList>
            <consortium name="U.S. Veterinary Immune Reagent Network"/>
            <person name="Hudgens T."/>
            <person name="Tompkins D."/>
            <person name="Baldwin C.L."/>
        </authorList>
    </citation>
    <scope>NUCLEOTIDE SEQUENCE [LARGE SCALE MRNA]</scope>
    <source>
        <strain>Belted Galloway</strain>
        <tissue>Peripheral blood</tissue>
    </source>
</reference>
<reference key="7">
    <citation type="submission" date="1989-12" db="EMBL/GenBank/DDBJ databases">
        <authorList>
            <person name="Anikeeva N.N."/>
            <person name="Vinogradova T.V."/>
            <person name="Votoshin O.N."/>
        </authorList>
    </citation>
    <scope>NUCLEOTIDE SEQUENCE [GENOMIC DNA] OF 1-22</scope>
    <source>
        <tissue>Thymus</tissue>
    </source>
</reference>
<name>IL2_BOVIN</name>
<gene>
    <name type="primary">IL2</name>
    <name type="synonym">IL-2</name>
</gene>
<comment type="function">
    <text evidence="2">Cytokine produced by activated CD4-positive helper T-cells and to a lesser extend activated CD8-positive T-cells and natural killer (NK) cells that plays pivotal roles in the immune response and tolerance. Binds to a receptor complex composed of either the high-affinity trimeric IL-2R (IL2RA/CD25, IL2RB/CD122 and IL2RG/CD132) or the low-affinity dimeric IL-2R (IL2RB and IL2RG). Interaction with the receptor leads to oligomerization and conformation changes in the IL-2R subunits resulting in downstream signaling starting with phosphorylation of JAK1 and JAK3. In turn, JAK1 and JAK3 phosphorylate the receptor to form a docking site leading to the phosphorylation of several substrates including STAT5. This process leads to activation of several pathways including STAT, phosphoinositide-3-kinase/PI3K and mitogen-activated protein kinase/MAPK pathways. Functions as a T-cell growth factor and can increase NK-cell cytolytic activity as well. Promotes strong proliferation of activated B-cells and subsequently immunoglobulin production. Plays a pivotal role in regulating the adaptive immune system by controlling the survival and proliferation of regulatory T-cells, which are required for the maintenance of immune tolerance. Moreover, participates in the differentiation and homeostasis of effector T-cell subsets, including Th1, Th2, Th17 as well as memory CD8-positive T-cells.</text>
</comment>
<comment type="subcellular location">
    <subcellularLocation>
        <location>Secreted</location>
    </subcellularLocation>
</comment>
<comment type="similarity">
    <text evidence="3">Belongs to the IL-2 family.</text>
</comment>
<comment type="sequence caution" evidence="3">
    <conflict type="erroneous initiation">
        <sequence resource="EMBL-CDS" id="AAA21143"/>
    </conflict>
</comment>
<evidence type="ECO:0000250" key="1"/>
<evidence type="ECO:0000250" key="2">
    <source>
        <dbReference type="UniProtKB" id="P60568"/>
    </source>
</evidence>
<evidence type="ECO:0000305" key="3"/>
<accession>P05016</accession>
<accession>A0MZP6</accession>
<accession>A9QWQ6</accession>
<accession>Q5QT38</accession>
<accession>Q8HYR7</accession>
<sequence length="155" mass="17628">MYKIQLLSCIALTLALVANGAPTSSSTGNTMKEVKSLLLDLQLLLEKVKNPENLKLSRMHTFDFYVPKVNATELKHLKCLLEELKLLEEVLNLAPSKNLNPREIKDSMDNIKRIVLELQGSETRFTCEYDDATVNAVEFLNKWITFCQSIYSTMT</sequence>